<organism>
    <name type="scientific">Spodoptera frugiperda ascovirus 1a</name>
    <name type="common">SfAV-1a</name>
    <dbReference type="NCBI Taxonomy" id="113370"/>
    <lineage>
        <taxon>Viruses</taxon>
        <taxon>Varidnaviria</taxon>
        <taxon>Bamfordvirae</taxon>
        <taxon>Nucleocytoviricota</taxon>
        <taxon>Megaviricetes</taxon>
        <taxon>Pimascovirales</taxon>
        <taxon>Ascoviridae</taxon>
        <taxon>Ascovirus</taxon>
        <taxon>Ascovirus sfav1a</taxon>
    </lineage>
</organism>
<feature type="chain" id="PRO_0000330597" description="Putative structural protein ORF84">
    <location>
        <begin position="1"/>
        <end position="1048"/>
    </location>
</feature>
<keyword id="KW-1185">Reference proteome</keyword>
<keyword id="KW-0946">Virion</keyword>
<evidence type="ECO:0000250" key="1"/>
<evidence type="ECO:0000305" key="2"/>
<organismHost>
    <name type="scientific">Spodoptera frugiperda</name>
    <name type="common">Fall armyworm</name>
    <dbReference type="NCBI Taxonomy" id="7108"/>
</organismHost>
<sequence length="1048" mass="119261">MIVADRLNTTTSMVWFPDYENGVGDNDAPRSGTHRAIDMYRYVRDLVSTTNQDGPRTLSEAVEPIRSWVDRDREVNLKFVEMCIIDAYTTDRRQVDDDIDAQTVVILDAILTQDGTGLDSNGAQYYRDVVRTFHDRHIEHAKAIAENKRLVPLYVAMYSNWSNTSAPTRATMDIEAIRGRYTVSVPESMERPMVILFNDLTISEDLVVFATHGELIKYDTRYPPSSDAALAAMSSRRARKGGERDKRISLYMVRRGIYSPGMNYDIAHVHQTPGVGYVITVISNNAPTVDVPRSLVTALGMGGDDDQVVVSDVGGGVTYTASFVLNDITFVTEYLQHYTLLKCTDKATCIFVDETHLMKYARDWRRYTIASPRFIYEYNNFTVKFSATVESTRRDVARVSPYCRIRIYDAPNTQIMYGMANDITAHMIEYKSRERSIASLYAENLHNDQLLRINVRIMRDSKRVKREPGYLARQHRQVRRKLQAQKTGTNADVRSLIGVNNYARQCARLPTAVFDVDDVPEAKEHITYQLPNDRGTLYVYCDHDDAPYPGVVTNRLAGNKTEYPTVPCCYRLRRNANGDPDEGRTQSFYNTQRILNTQAFGKCPANLESVLMCQRYMSRDEVDAAGMETYFPKQSVVGDATAVRGGVNAGPNAAIEAVMRAVHAIKGRDSDPRRLVITTDRLADERSEMVSLLTCASQELFDMSATERNAWLNDTVSYFDPLRLVKLLQFHFDVNVYVYVRGARVKPVKSVRTTENGGVMLRFFEEYEQAWTDNDDVLVVPHHYAGADYHDLKVHESSVVIYVHSGTEISNLTYPHVEYIIFKRHRLVVPMIGKIYQRLLPKSMRNVYSFVYFDVVEDEDERDSLTVDEANALRILFYLSSGKSVSTEWSGKVSTTLNAPTTQTIDGIGRMVGVGGRALESMYSTEPLPSLAVDNHDHSMYYFDDNVKRKRLMNPEHSAKCQYAWYLNKLARVLLHLTAYTILKKGTLMSDLFLVDDVRFNRLHDSINTLFETGVVDMDSYGNLLIAEEERVLAIPSTRHVAWCTMHR</sequence>
<gene>
    <name type="ORF">ORF84</name>
</gene>
<protein>
    <recommendedName>
        <fullName>Putative structural protein ORF84</fullName>
    </recommendedName>
</protein>
<comment type="subcellular location">
    <subcellularLocation>
        <location evidence="1">Virion</location>
    </subcellularLocation>
</comment>
<comment type="similarity">
    <text evidence="2">Belongs to the ascovirus HvAV ORF146 family.</text>
</comment>
<name>Y084_SFAVA</name>
<dbReference type="EMBL" id="AM398843">
    <property type="protein sequence ID" value="CAL44684.1"/>
    <property type="molecule type" value="Genomic_DNA"/>
</dbReference>
<dbReference type="KEGG" id="vg:4306250"/>
<dbReference type="OrthoDB" id="1424at10239"/>
<dbReference type="Proteomes" id="UP000008030">
    <property type="component" value="Genome"/>
</dbReference>
<dbReference type="GO" id="GO:0044423">
    <property type="term" value="C:virion component"/>
    <property type="evidence" value="ECO:0007669"/>
    <property type="project" value="UniProtKB-KW"/>
</dbReference>
<dbReference type="InterPro" id="IPR043920">
    <property type="entry name" value="DUF5757"/>
</dbReference>
<dbReference type="Pfam" id="PF19061">
    <property type="entry name" value="DUF5757"/>
    <property type="match status" value="1"/>
</dbReference>
<accession>Q0E517</accession>
<proteinExistence type="inferred from homology"/>
<reference key="1">
    <citation type="journal article" date="2006" name="J. Virol.">
        <title>Genomic sequence of Spodoptera frugiperda Ascovirus 1a, an enveloped, double-stranded DNA insect virus that manipulates apoptosis for viral reproduction.</title>
        <authorList>
            <person name="Bideshi D.K."/>
            <person name="Demattei M.V."/>
            <person name="Rouleux-Bonnin F."/>
            <person name="Stasiak K."/>
            <person name="Tan Y."/>
            <person name="Bigot S."/>
            <person name="Bigot Y."/>
            <person name="Federici B.A."/>
        </authorList>
    </citation>
    <scope>NUCLEOTIDE SEQUENCE [LARGE SCALE GENOMIC DNA]</scope>
</reference>